<dbReference type="EC" id="6.3.5.-" evidence="1"/>
<dbReference type="EMBL" id="CAAE01014999">
    <property type="protein sequence ID" value="CAG08515.1"/>
    <property type="molecule type" value="Genomic_DNA"/>
</dbReference>
<dbReference type="SMR" id="Q4RSW7"/>
<dbReference type="FunCoup" id="Q4RSW7">
    <property type="interactions" value="305"/>
</dbReference>
<dbReference type="STRING" id="99883.ENSTNIP00000018964"/>
<dbReference type="KEGG" id="tng:GSTEN00029516G001"/>
<dbReference type="InParanoid" id="Q4RSW7"/>
<dbReference type="OrthoDB" id="5394539at2759"/>
<dbReference type="Proteomes" id="UP000007303">
    <property type="component" value="Unassembled WGS sequence"/>
</dbReference>
<dbReference type="GO" id="GO:0030956">
    <property type="term" value="C:glutamyl-tRNA(Gln) amidotransferase complex"/>
    <property type="evidence" value="ECO:0007669"/>
    <property type="project" value="UniProtKB-UniRule"/>
</dbReference>
<dbReference type="GO" id="GO:0005739">
    <property type="term" value="C:mitochondrion"/>
    <property type="evidence" value="ECO:0007669"/>
    <property type="project" value="UniProtKB-SubCell"/>
</dbReference>
<dbReference type="GO" id="GO:0005524">
    <property type="term" value="F:ATP binding"/>
    <property type="evidence" value="ECO:0007669"/>
    <property type="project" value="UniProtKB-KW"/>
</dbReference>
<dbReference type="GO" id="GO:0050567">
    <property type="term" value="F:glutaminyl-tRNA synthase (glutamine-hydrolyzing) activity"/>
    <property type="evidence" value="ECO:0007669"/>
    <property type="project" value="UniProtKB-UniRule"/>
</dbReference>
<dbReference type="GO" id="GO:0070681">
    <property type="term" value="P:glutaminyl-tRNAGln biosynthesis via transamidation"/>
    <property type="evidence" value="ECO:0007669"/>
    <property type="project" value="UniProtKB-UniRule"/>
</dbReference>
<dbReference type="GO" id="GO:0032543">
    <property type="term" value="P:mitochondrial translation"/>
    <property type="evidence" value="ECO:0007669"/>
    <property type="project" value="UniProtKB-UniRule"/>
</dbReference>
<dbReference type="GO" id="GO:0006450">
    <property type="term" value="P:regulation of translational fidelity"/>
    <property type="evidence" value="ECO:0007669"/>
    <property type="project" value="InterPro"/>
</dbReference>
<dbReference type="HAMAP" id="MF_00122">
    <property type="entry name" value="GatC"/>
    <property type="match status" value="1"/>
</dbReference>
<dbReference type="InterPro" id="IPR036113">
    <property type="entry name" value="Asp/Glu-ADT_sf_sub_c"/>
</dbReference>
<dbReference type="InterPro" id="IPR003837">
    <property type="entry name" value="GatC"/>
</dbReference>
<dbReference type="PANTHER" id="PTHR15004">
    <property type="entry name" value="GLUTAMYL-TRNA(GLN) AMIDOTRANSFERASE SUBUNIT C, MITOCHONDRIAL"/>
    <property type="match status" value="1"/>
</dbReference>
<dbReference type="PANTHER" id="PTHR15004:SF0">
    <property type="entry name" value="GLUTAMYL-TRNA(GLN) AMIDOTRANSFERASE SUBUNIT C, MITOCHONDRIAL"/>
    <property type="match status" value="1"/>
</dbReference>
<dbReference type="Pfam" id="PF02686">
    <property type="entry name" value="GatC"/>
    <property type="match status" value="1"/>
</dbReference>
<dbReference type="SUPFAM" id="SSF141000">
    <property type="entry name" value="Glu-tRNAGln amidotransferase C subunit"/>
    <property type="match status" value="1"/>
</dbReference>
<feature type="transit peptide" description="Mitochondrion" evidence="1">
    <location>
        <begin position="1"/>
        <end position="11"/>
    </location>
</feature>
<feature type="chain" id="PRO_0000413293" description="Glutamyl-tRNA(Gln) amidotransferase subunit C, mitochondrial">
    <location>
        <begin position="12"/>
        <end position="188"/>
    </location>
</feature>
<reference key="1">
    <citation type="journal article" date="2004" name="Nature">
        <title>Genome duplication in the teleost fish Tetraodon nigroviridis reveals the early vertebrate proto-karyotype.</title>
        <authorList>
            <person name="Jaillon O."/>
            <person name="Aury J.-M."/>
            <person name="Brunet F."/>
            <person name="Petit J.-L."/>
            <person name="Stange-Thomann N."/>
            <person name="Mauceli E."/>
            <person name="Bouneau L."/>
            <person name="Fischer C."/>
            <person name="Ozouf-Costaz C."/>
            <person name="Bernot A."/>
            <person name="Nicaud S."/>
            <person name="Jaffe D."/>
            <person name="Fisher S."/>
            <person name="Lutfalla G."/>
            <person name="Dossat C."/>
            <person name="Segurens B."/>
            <person name="Dasilva C."/>
            <person name="Salanoubat M."/>
            <person name="Levy M."/>
            <person name="Boudet N."/>
            <person name="Castellano S."/>
            <person name="Anthouard V."/>
            <person name="Jubin C."/>
            <person name="Castelli V."/>
            <person name="Katinka M."/>
            <person name="Vacherie B."/>
            <person name="Biemont C."/>
            <person name="Skalli Z."/>
            <person name="Cattolico L."/>
            <person name="Poulain J."/>
            <person name="De Berardinis V."/>
            <person name="Cruaud C."/>
            <person name="Duprat S."/>
            <person name="Brottier P."/>
            <person name="Coutanceau J.-P."/>
            <person name="Gouzy J."/>
            <person name="Parra G."/>
            <person name="Lardier G."/>
            <person name="Chapple C."/>
            <person name="McKernan K.J."/>
            <person name="McEwan P."/>
            <person name="Bosak S."/>
            <person name="Kellis M."/>
            <person name="Volff J.-N."/>
            <person name="Guigo R."/>
            <person name="Zody M.C."/>
            <person name="Mesirov J."/>
            <person name="Lindblad-Toh K."/>
            <person name="Birren B."/>
            <person name="Nusbaum C."/>
            <person name="Kahn D."/>
            <person name="Robinson-Rechavi M."/>
            <person name="Laudet V."/>
            <person name="Schachter V."/>
            <person name="Quetier F."/>
            <person name="Saurin W."/>
            <person name="Scarpelli C."/>
            <person name="Wincker P."/>
            <person name="Lander E.S."/>
            <person name="Weissenbach J."/>
            <person name="Roest Crollius H."/>
        </authorList>
    </citation>
    <scope>NUCLEOTIDE SEQUENCE [LARGE SCALE GENOMIC DNA]</scope>
</reference>
<gene>
    <name type="primary">gatc</name>
    <name type="ORF">GSTENG00029516001</name>
</gene>
<organism>
    <name type="scientific">Tetraodon nigroviridis</name>
    <name type="common">Spotted green pufferfish</name>
    <name type="synonym">Chelonodon nigroviridis</name>
    <dbReference type="NCBI Taxonomy" id="99883"/>
    <lineage>
        <taxon>Eukaryota</taxon>
        <taxon>Metazoa</taxon>
        <taxon>Chordata</taxon>
        <taxon>Craniata</taxon>
        <taxon>Vertebrata</taxon>
        <taxon>Euteleostomi</taxon>
        <taxon>Actinopterygii</taxon>
        <taxon>Neopterygii</taxon>
        <taxon>Teleostei</taxon>
        <taxon>Neoteleostei</taxon>
        <taxon>Acanthomorphata</taxon>
        <taxon>Eupercaria</taxon>
        <taxon>Tetraodontiformes</taxon>
        <taxon>Tetradontoidea</taxon>
        <taxon>Tetraodontidae</taxon>
        <taxon>Tetraodon</taxon>
    </lineage>
</organism>
<comment type="function">
    <text evidence="1">Allows the formation of correctly charged Gln-tRNA(Gln) through the transamidation of misacylated Glu-tRNA(Gln) in the mitochondria. The reaction takes place in the presence of glutamine and ATP through an activated gamma-phospho-Glu-tRNA(Gln).</text>
</comment>
<comment type="catalytic activity">
    <reaction evidence="1">
        <text>L-glutamyl-tRNA(Gln) + L-glutamine + ATP + H2O = L-glutaminyl-tRNA(Gln) + L-glutamate + ADP + phosphate + H(+)</text>
        <dbReference type="Rhea" id="RHEA:17521"/>
        <dbReference type="Rhea" id="RHEA-COMP:9681"/>
        <dbReference type="Rhea" id="RHEA-COMP:9684"/>
        <dbReference type="ChEBI" id="CHEBI:15377"/>
        <dbReference type="ChEBI" id="CHEBI:15378"/>
        <dbReference type="ChEBI" id="CHEBI:29985"/>
        <dbReference type="ChEBI" id="CHEBI:30616"/>
        <dbReference type="ChEBI" id="CHEBI:43474"/>
        <dbReference type="ChEBI" id="CHEBI:58359"/>
        <dbReference type="ChEBI" id="CHEBI:78520"/>
        <dbReference type="ChEBI" id="CHEBI:78521"/>
        <dbReference type="ChEBI" id="CHEBI:456216"/>
    </reaction>
</comment>
<comment type="subunit">
    <text evidence="1">Subunit of the heterotrimeric GatCAB amidotransferase (AdT) complex, composed of A (qrsl1), B (gatb) and C (gatc) subunits.</text>
</comment>
<comment type="subcellular location">
    <subcellularLocation>
        <location evidence="1">Mitochondrion</location>
    </subcellularLocation>
</comment>
<comment type="similarity">
    <text evidence="1">Belongs to the GatC family.</text>
</comment>
<protein>
    <recommendedName>
        <fullName evidence="1">Glutamyl-tRNA(Gln) amidotransferase subunit C, mitochondrial</fullName>
        <shortName evidence="1">Glu-AdT subunit C</shortName>
        <ecNumber evidence="1">6.3.5.-</ecNumber>
    </recommendedName>
</protein>
<evidence type="ECO:0000255" key="1">
    <source>
        <dbReference type="HAMAP-Rule" id="MF_03149"/>
    </source>
</evidence>
<keyword id="KW-0067">ATP-binding</keyword>
<keyword id="KW-0436">Ligase</keyword>
<keyword id="KW-0496">Mitochondrion</keyword>
<keyword id="KW-0547">Nucleotide-binding</keyword>
<keyword id="KW-0648">Protein biosynthesis</keyword>
<keyword id="KW-1185">Reference proteome</keyword>
<keyword id="KW-0809">Transit peptide</keyword>
<sequence length="188" mass="21152">MSVLRFATRRGLSWCYASRLTHQGTSVTSGEGSPGTRTSRVPARVLNLTRPLSCRAYNSKVPQSPTWEPVSEDLLPPCAQFPADLVDKLERLALVDFRTKQGLECLEKAIRFADQLHVVDTSGVEPMDSVLEDRVLYLREDEEKEGDCAEELLQLSRNTCEEYYVAPPGNIPLPTREKRAAMLKHSEF</sequence>
<name>GATC_TETNG</name>
<proteinExistence type="inferred from homology"/>
<accession>Q4RSW7</accession>